<reference key="1">
    <citation type="journal article" date="2008" name="PLoS ONE">
        <title>Genome sequence of the saprophyte Leptospira biflexa provides insights into the evolution of Leptospira and the pathogenesis of leptospirosis.</title>
        <authorList>
            <person name="Picardeau M."/>
            <person name="Bulach D.M."/>
            <person name="Bouchier C."/>
            <person name="Zuerner R.L."/>
            <person name="Zidane N."/>
            <person name="Wilson P.J."/>
            <person name="Creno S."/>
            <person name="Kuczek E.S."/>
            <person name="Bommezzadri S."/>
            <person name="Davis J.C."/>
            <person name="McGrath A."/>
            <person name="Johnson M.J."/>
            <person name="Boursaux-Eude C."/>
            <person name="Seemann T."/>
            <person name="Rouy Z."/>
            <person name="Coppel R.L."/>
            <person name="Rood J.I."/>
            <person name="Lajus A."/>
            <person name="Davies J.K."/>
            <person name="Medigue C."/>
            <person name="Adler B."/>
        </authorList>
    </citation>
    <scope>NUCLEOTIDE SEQUENCE [LARGE SCALE GENOMIC DNA]</scope>
    <source>
        <strain>Patoc 1 / Ames</strain>
    </source>
</reference>
<name>GPDA_LEPBA</name>
<evidence type="ECO:0000255" key="1">
    <source>
        <dbReference type="HAMAP-Rule" id="MF_00394"/>
    </source>
</evidence>
<comment type="function">
    <text evidence="1">Catalyzes the reduction of the glycolytic intermediate dihydroxyacetone phosphate (DHAP) to sn-glycerol 3-phosphate (G3P), the key precursor for phospholipid synthesis.</text>
</comment>
<comment type="catalytic activity">
    <reaction evidence="1">
        <text>sn-glycerol 3-phosphate + NAD(+) = dihydroxyacetone phosphate + NADH + H(+)</text>
        <dbReference type="Rhea" id="RHEA:11092"/>
        <dbReference type="ChEBI" id="CHEBI:15378"/>
        <dbReference type="ChEBI" id="CHEBI:57540"/>
        <dbReference type="ChEBI" id="CHEBI:57597"/>
        <dbReference type="ChEBI" id="CHEBI:57642"/>
        <dbReference type="ChEBI" id="CHEBI:57945"/>
        <dbReference type="EC" id="1.1.1.94"/>
    </reaction>
    <physiologicalReaction direction="right-to-left" evidence="1">
        <dbReference type="Rhea" id="RHEA:11094"/>
    </physiologicalReaction>
</comment>
<comment type="catalytic activity">
    <reaction evidence="1">
        <text>sn-glycerol 3-phosphate + NADP(+) = dihydroxyacetone phosphate + NADPH + H(+)</text>
        <dbReference type="Rhea" id="RHEA:11096"/>
        <dbReference type="ChEBI" id="CHEBI:15378"/>
        <dbReference type="ChEBI" id="CHEBI:57597"/>
        <dbReference type="ChEBI" id="CHEBI:57642"/>
        <dbReference type="ChEBI" id="CHEBI:57783"/>
        <dbReference type="ChEBI" id="CHEBI:58349"/>
        <dbReference type="EC" id="1.1.1.94"/>
    </reaction>
    <physiologicalReaction direction="right-to-left" evidence="1">
        <dbReference type="Rhea" id="RHEA:11098"/>
    </physiologicalReaction>
</comment>
<comment type="pathway">
    <text evidence="1">Membrane lipid metabolism; glycerophospholipid metabolism.</text>
</comment>
<comment type="subcellular location">
    <subcellularLocation>
        <location evidence="1">Cytoplasm</location>
    </subcellularLocation>
</comment>
<comment type="similarity">
    <text evidence="1">Belongs to the NAD-dependent glycerol-3-phosphate dehydrogenase family.</text>
</comment>
<sequence length="333" mass="36125">MKIGIIGAGSFGTALGSILADKGYDVTLWTRSEEQARSINENHMNSKHMPDLVLPDRLKASTDLIQVVKDKDMIVSAPPSHALSGILKEIKDHIPPKVPIVSASKGIENESLRLVSEIFESELPGQFHSQLSYLSGPSFAKEMVKRVPTIVSIASKNEATAKRVQEIFSFTYFRTYWTPDVVGVEVGGALKNVIAIAAGVADGLGFGQNTRAALITRGLNEITRMGIKMGADPMTFLGPSGMGDLVLTCCGEASRNRTVGFRLGKGESLKEILSSMNEVAEGVKTTLSTKNLADKLGVEMAITQEVYHMLYEDKDPKEVVRALMSRDLKREGV</sequence>
<protein>
    <recommendedName>
        <fullName evidence="1">Glycerol-3-phosphate dehydrogenase [NAD(P)+]</fullName>
        <ecNumber evidence="1">1.1.1.94</ecNumber>
    </recommendedName>
    <alternativeName>
        <fullName evidence="1">NAD(P)(+)-dependent glycerol-3-phosphate dehydrogenase</fullName>
    </alternativeName>
    <alternativeName>
        <fullName evidence="1">NAD(P)H-dependent dihydroxyacetone-phosphate reductase</fullName>
    </alternativeName>
</protein>
<dbReference type="EC" id="1.1.1.94" evidence="1"/>
<dbReference type="EMBL" id="CP000777">
    <property type="protein sequence ID" value="ABZ92880.1"/>
    <property type="molecule type" value="Genomic_DNA"/>
</dbReference>
<dbReference type="RefSeq" id="WP_012387376.1">
    <property type="nucleotide sequence ID" value="NC_010842.1"/>
</dbReference>
<dbReference type="SMR" id="B0SAV3"/>
<dbReference type="KEGG" id="lbf:LBF_0334"/>
<dbReference type="HOGENOM" id="CLU_033449_0_2_12"/>
<dbReference type="UniPathway" id="UPA00940"/>
<dbReference type="GO" id="GO:0005829">
    <property type="term" value="C:cytosol"/>
    <property type="evidence" value="ECO:0007669"/>
    <property type="project" value="TreeGrafter"/>
</dbReference>
<dbReference type="GO" id="GO:0047952">
    <property type="term" value="F:glycerol-3-phosphate dehydrogenase [NAD(P)+] activity"/>
    <property type="evidence" value="ECO:0007669"/>
    <property type="project" value="UniProtKB-UniRule"/>
</dbReference>
<dbReference type="GO" id="GO:0051287">
    <property type="term" value="F:NAD binding"/>
    <property type="evidence" value="ECO:0007669"/>
    <property type="project" value="InterPro"/>
</dbReference>
<dbReference type="GO" id="GO:0005975">
    <property type="term" value="P:carbohydrate metabolic process"/>
    <property type="evidence" value="ECO:0007669"/>
    <property type="project" value="InterPro"/>
</dbReference>
<dbReference type="GO" id="GO:0046167">
    <property type="term" value="P:glycerol-3-phosphate biosynthetic process"/>
    <property type="evidence" value="ECO:0007669"/>
    <property type="project" value="UniProtKB-UniRule"/>
</dbReference>
<dbReference type="GO" id="GO:0046168">
    <property type="term" value="P:glycerol-3-phosphate catabolic process"/>
    <property type="evidence" value="ECO:0007669"/>
    <property type="project" value="InterPro"/>
</dbReference>
<dbReference type="GO" id="GO:0006650">
    <property type="term" value="P:glycerophospholipid metabolic process"/>
    <property type="evidence" value="ECO:0007669"/>
    <property type="project" value="UniProtKB-UniRule"/>
</dbReference>
<dbReference type="GO" id="GO:0008654">
    <property type="term" value="P:phospholipid biosynthetic process"/>
    <property type="evidence" value="ECO:0007669"/>
    <property type="project" value="UniProtKB-KW"/>
</dbReference>
<dbReference type="FunFam" id="1.10.1040.10:FF:000001">
    <property type="entry name" value="Glycerol-3-phosphate dehydrogenase [NAD(P)+]"/>
    <property type="match status" value="1"/>
</dbReference>
<dbReference type="FunFam" id="3.40.50.720:FF:000019">
    <property type="entry name" value="Glycerol-3-phosphate dehydrogenase [NAD(P)+]"/>
    <property type="match status" value="1"/>
</dbReference>
<dbReference type="Gene3D" id="1.10.1040.10">
    <property type="entry name" value="N-(1-d-carboxylethyl)-l-norvaline Dehydrogenase, domain 2"/>
    <property type="match status" value="1"/>
</dbReference>
<dbReference type="Gene3D" id="3.40.50.720">
    <property type="entry name" value="NAD(P)-binding Rossmann-like Domain"/>
    <property type="match status" value="1"/>
</dbReference>
<dbReference type="HAMAP" id="MF_00394">
    <property type="entry name" value="NAD_Glyc3P_dehydrog"/>
    <property type="match status" value="1"/>
</dbReference>
<dbReference type="InterPro" id="IPR008927">
    <property type="entry name" value="6-PGluconate_DH-like_C_sf"/>
</dbReference>
<dbReference type="InterPro" id="IPR013328">
    <property type="entry name" value="6PGD_dom2"/>
</dbReference>
<dbReference type="InterPro" id="IPR006168">
    <property type="entry name" value="G3P_DH_NAD-dep"/>
</dbReference>
<dbReference type="InterPro" id="IPR006109">
    <property type="entry name" value="G3P_DH_NAD-dep_C"/>
</dbReference>
<dbReference type="InterPro" id="IPR011128">
    <property type="entry name" value="G3P_DH_NAD-dep_N"/>
</dbReference>
<dbReference type="InterPro" id="IPR036291">
    <property type="entry name" value="NAD(P)-bd_dom_sf"/>
</dbReference>
<dbReference type="NCBIfam" id="NF000940">
    <property type="entry name" value="PRK00094.1-2"/>
    <property type="match status" value="1"/>
</dbReference>
<dbReference type="NCBIfam" id="NF000942">
    <property type="entry name" value="PRK00094.1-4"/>
    <property type="match status" value="1"/>
</dbReference>
<dbReference type="PANTHER" id="PTHR11728">
    <property type="entry name" value="GLYCEROL-3-PHOSPHATE DEHYDROGENASE"/>
    <property type="match status" value="1"/>
</dbReference>
<dbReference type="PANTHER" id="PTHR11728:SF1">
    <property type="entry name" value="GLYCEROL-3-PHOSPHATE DEHYDROGENASE [NAD(+)] 2, CHLOROPLASTIC"/>
    <property type="match status" value="1"/>
</dbReference>
<dbReference type="Pfam" id="PF07479">
    <property type="entry name" value="NAD_Gly3P_dh_C"/>
    <property type="match status" value="1"/>
</dbReference>
<dbReference type="Pfam" id="PF01210">
    <property type="entry name" value="NAD_Gly3P_dh_N"/>
    <property type="match status" value="1"/>
</dbReference>
<dbReference type="PIRSF" id="PIRSF000114">
    <property type="entry name" value="Glycerol-3-P_dh"/>
    <property type="match status" value="1"/>
</dbReference>
<dbReference type="PRINTS" id="PR00077">
    <property type="entry name" value="GPDHDRGNASE"/>
</dbReference>
<dbReference type="SUPFAM" id="SSF48179">
    <property type="entry name" value="6-phosphogluconate dehydrogenase C-terminal domain-like"/>
    <property type="match status" value="1"/>
</dbReference>
<dbReference type="SUPFAM" id="SSF51735">
    <property type="entry name" value="NAD(P)-binding Rossmann-fold domains"/>
    <property type="match status" value="1"/>
</dbReference>
<dbReference type="PROSITE" id="PS00957">
    <property type="entry name" value="NAD_G3PDH"/>
    <property type="match status" value="1"/>
</dbReference>
<feature type="chain" id="PRO_1000190163" description="Glycerol-3-phosphate dehydrogenase [NAD(P)+]">
    <location>
        <begin position="1"/>
        <end position="333"/>
    </location>
</feature>
<feature type="active site" description="Proton acceptor" evidence="1">
    <location>
        <position position="191"/>
    </location>
</feature>
<feature type="binding site" evidence="1">
    <location>
        <position position="10"/>
    </location>
    <ligand>
        <name>NADPH</name>
        <dbReference type="ChEBI" id="CHEBI:57783"/>
    </ligand>
</feature>
<feature type="binding site" evidence="1">
    <location>
        <position position="11"/>
    </location>
    <ligand>
        <name>NADPH</name>
        <dbReference type="ChEBI" id="CHEBI:57783"/>
    </ligand>
</feature>
<feature type="binding site" evidence="1">
    <location>
        <position position="31"/>
    </location>
    <ligand>
        <name>NADPH</name>
        <dbReference type="ChEBI" id="CHEBI:57783"/>
    </ligand>
</feature>
<feature type="binding site" evidence="1">
    <location>
        <position position="105"/>
    </location>
    <ligand>
        <name>NADPH</name>
        <dbReference type="ChEBI" id="CHEBI:57783"/>
    </ligand>
</feature>
<feature type="binding site" evidence="1">
    <location>
        <position position="105"/>
    </location>
    <ligand>
        <name>sn-glycerol 3-phosphate</name>
        <dbReference type="ChEBI" id="CHEBI:57597"/>
    </ligand>
</feature>
<feature type="binding site" evidence="1">
    <location>
        <position position="136"/>
    </location>
    <ligand>
        <name>sn-glycerol 3-phosphate</name>
        <dbReference type="ChEBI" id="CHEBI:57597"/>
    </ligand>
</feature>
<feature type="binding site" evidence="1">
    <location>
        <position position="138"/>
    </location>
    <ligand>
        <name>sn-glycerol 3-phosphate</name>
        <dbReference type="ChEBI" id="CHEBI:57597"/>
    </ligand>
</feature>
<feature type="binding site" evidence="1">
    <location>
        <position position="140"/>
    </location>
    <ligand>
        <name>NADPH</name>
        <dbReference type="ChEBI" id="CHEBI:57783"/>
    </ligand>
</feature>
<feature type="binding site" evidence="1">
    <location>
        <position position="191"/>
    </location>
    <ligand>
        <name>sn-glycerol 3-phosphate</name>
        <dbReference type="ChEBI" id="CHEBI:57597"/>
    </ligand>
</feature>
<feature type="binding site" evidence="1">
    <location>
        <position position="244"/>
    </location>
    <ligand>
        <name>sn-glycerol 3-phosphate</name>
        <dbReference type="ChEBI" id="CHEBI:57597"/>
    </ligand>
</feature>
<feature type="binding site" evidence="1">
    <location>
        <position position="254"/>
    </location>
    <ligand>
        <name>sn-glycerol 3-phosphate</name>
        <dbReference type="ChEBI" id="CHEBI:57597"/>
    </ligand>
</feature>
<feature type="binding site" evidence="1">
    <location>
        <position position="255"/>
    </location>
    <ligand>
        <name>NADPH</name>
        <dbReference type="ChEBI" id="CHEBI:57783"/>
    </ligand>
</feature>
<feature type="binding site" evidence="1">
    <location>
        <position position="255"/>
    </location>
    <ligand>
        <name>sn-glycerol 3-phosphate</name>
        <dbReference type="ChEBI" id="CHEBI:57597"/>
    </ligand>
</feature>
<feature type="binding site" evidence="1">
    <location>
        <position position="256"/>
    </location>
    <ligand>
        <name>sn-glycerol 3-phosphate</name>
        <dbReference type="ChEBI" id="CHEBI:57597"/>
    </ligand>
</feature>
<feature type="binding site" evidence="1">
    <location>
        <position position="279"/>
    </location>
    <ligand>
        <name>NADPH</name>
        <dbReference type="ChEBI" id="CHEBI:57783"/>
    </ligand>
</feature>
<feature type="binding site" evidence="1">
    <location>
        <position position="281"/>
    </location>
    <ligand>
        <name>NADPH</name>
        <dbReference type="ChEBI" id="CHEBI:57783"/>
    </ligand>
</feature>
<organism>
    <name type="scientific">Leptospira biflexa serovar Patoc (strain Patoc 1 / Ames)</name>
    <dbReference type="NCBI Taxonomy" id="355278"/>
    <lineage>
        <taxon>Bacteria</taxon>
        <taxon>Pseudomonadati</taxon>
        <taxon>Spirochaetota</taxon>
        <taxon>Spirochaetia</taxon>
        <taxon>Leptospirales</taxon>
        <taxon>Leptospiraceae</taxon>
        <taxon>Leptospira</taxon>
    </lineage>
</organism>
<accession>B0SAV3</accession>
<proteinExistence type="inferred from homology"/>
<keyword id="KW-0963">Cytoplasm</keyword>
<keyword id="KW-0444">Lipid biosynthesis</keyword>
<keyword id="KW-0443">Lipid metabolism</keyword>
<keyword id="KW-0520">NAD</keyword>
<keyword id="KW-0521">NADP</keyword>
<keyword id="KW-0547">Nucleotide-binding</keyword>
<keyword id="KW-0560">Oxidoreductase</keyword>
<keyword id="KW-0594">Phospholipid biosynthesis</keyword>
<keyword id="KW-1208">Phospholipid metabolism</keyword>
<gene>
    <name evidence="1" type="primary">gpsA</name>
    <name type="ordered locus">LBF_0334</name>
</gene>